<organism>
    <name type="scientific">Chilobrachys guangxiensis</name>
    <name type="common">Chinese earth tiger tarantula</name>
    <name type="synonym">Chilobrachys jingzhao</name>
    <dbReference type="NCBI Taxonomy" id="278060"/>
    <lineage>
        <taxon>Eukaryota</taxon>
        <taxon>Metazoa</taxon>
        <taxon>Ecdysozoa</taxon>
        <taxon>Arthropoda</taxon>
        <taxon>Chelicerata</taxon>
        <taxon>Arachnida</taxon>
        <taxon>Araneae</taxon>
        <taxon>Mygalomorphae</taxon>
        <taxon>Theraphosidae</taxon>
        <taxon>Chilobrachys</taxon>
    </lineage>
</organism>
<dbReference type="EMBL" id="EU233834">
    <property type="protein sequence ID" value="ABY71653.1"/>
    <property type="molecule type" value="mRNA"/>
</dbReference>
<dbReference type="PDB" id="1ZJQ">
    <property type="method" value="NMR"/>
    <property type="chains" value="A=30-63"/>
</dbReference>
<dbReference type="PDB" id="2AAP">
    <property type="method" value="NMR"/>
    <property type="chains" value="A=30-63"/>
</dbReference>
<dbReference type="PDBsum" id="1ZJQ"/>
<dbReference type="PDBsum" id="2AAP"/>
<dbReference type="SMR" id="P0C2X7"/>
<dbReference type="ArachnoServer" id="AS000048">
    <property type="toxin name" value="U1-theraphotoxin-Cg1a"/>
</dbReference>
<dbReference type="EvolutionaryTrace" id="P0C2X7"/>
<dbReference type="GO" id="GO:0005576">
    <property type="term" value="C:extracellular region"/>
    <property type="evidence" value="ECO:0007669"/>
    <property type="project" value="UniProtKB-SubCell"/>
</dbReference>
<dbReference type="GO" id="GO:0008200">
    <property type="term" value="F:ion channel inhibitor activity"/>
    <property type="evidence" value="ECO:0007669"/>
    <property type="project" value="InterPro"/>
</dbReference>
<dbReference type="GO" id="GO:0090729">
    <property type="term" value="F:toxin activity"/>
    <property type="evidence" value="ECO:0007669"/>
    <property type="project" value="UniProtKB-KW"/>
</dbReference>
<dbReference type="InterPro" id="IPR011696">
    <property type="entry name" value="Huwentoxin-1"/>
</dbReference>
<dbReference type="InterPro" id="IPR013140">
    <property type="entry name" value="Huwentoxin_CS1"/>
</dbReference>
<dbReference type="Pfam" id="PF07740">
    <property type="entry name" value="Toxin_12"/>
    <property type="match status" value="1"/>
</dbReference>
<dbReference type="SUPFAM" id="SSF57059">
    <property type="entry name" value="omega toxin-like"/>
    <property type="match status" value="1"/>
</dbReference>
<dbReference type="PROSITE" id="PS60021">
    <property type="entry name" value="HWTX_1"/>
    <property type="match status" value="1"/>
</dbReference>
<feature type="signal peptide" evidence="1">
    <location>
        <begin position="1"/>
        <end position="21"/>
    </location>
</feature>
<feature type="propeptide" id="PRO_0000398384" evidence="2 3">
    <location>
        <begin position="22"/>
        <end position="29"/>
    </location>
</feature>
<feature type="peptide" id="PRO_0000287584" description="U1-theraphotoxin-Cg1a 1">
    <location>
        <begin position="30"/>
        <end position="63"/>
    </location>
</feature>
<feature type="modified residue" description="Proline amide" evidence="2">
    <location>
        <position position="63"/>
    </location>
</feature>
<feature type="disulfide bond" evidence="3">
    <location>
        <begin position="31"/>
        <end position="46"/>
    </location>
</feature>
<feature type="disulfide bond" evidence="3">
    <location>
        <begin position="38"/>
        <end position="51"/>
    </location>
</feature>
<feature type="disulfide bond" evidence="3">
    <location>
        <begin position="45"/>
        <end position="58"/>
    </location>
</feature>
<feature type="strand" evidence="5">
    <location>
        <begin position="33"/>
        <end position="35"/>
    </location>
</feature>
<feature type="strand" evidence="5">
    <location>
        <begin position="46"/>
        <end position="52"/>
    </location>
</feature>
<feature type="turn" evidence="5">
    <location>
        <begin position="53"/>
        <end position="56"/>
    </location>
</feature>
<feature type="strand" evidence="5">
    <location>
        <begin position="57"/>
        <end position="60"/>
    </location>
</feature>
<evidence type="ECO:0000255" key="1"/>
<evidence type="ECO:0000269" key="2">
    <source>
    </source>
</evidence>
<evidence type="ECO:0000269" key="3">
    <source ref="3"/>
</evidence>
<evidence type="ECO:0000305" key="4"/>
<evidence type="ECO:0007829" key="5">
    <source>
        <dbReference type="PDB" id="1ZJQ"/>
    </source>
</evidence>
<reference key="1">
    <citation type="journal article" date="2008" name="Cell. Mol. Life Sci.">
        <title>Molecular diversity and evolution of cystine knot toxins of the tarantula Chilobrachys jingzhao.</title>
        <authorList>
            <person name="Chen J."/>
            <person name="Deng M."/>
            <person name="He Q."/>
            <person name="Meng E."/>
            <person name="Jiang L."/>
            <person name="Liao Z."/>
            <person name="Rong M."/>
            <person name="Liang S."/>
        </authorList>
    </citation>
    <scope>NUCLEOTIDE SEQUENCE [LARGE SCALE MRNA]</scope>
    <source>
        <tissue>Venom gland</tissue>
    </source>
</reference>
<reference key="2">
    <citation type="journal article" date="2007" name="Proteomics">
        <title>Proteomic and peptidomic analysis of the venom from Chinese tarantula Chilobrachys jingzhao.</title>
        <authorList>
            <person name="Liao Z."/>
            <person name="Cao J."/>
            <person name="Li S."/>
            <person name="Yan X."/>
            <person name="Hu W."/>
            <person name="He Q."/>
            <person name="Chen J."/>
            <person name="Tang J."/>
            <person name="Xie J."/>
            <person name="Liang S."/>
        </authorList>
    </citation>
    <scope>PROTEIN SEQUENCE OF 30-63</scope>
    <scope>MASS SPECTROMETRY</scope>
    <scope>AMIDATION AT PRO-63</scope>
    <source>
        <tissue>Venom</tissue>
    </source>
</reference>
<reference key="3">
    <citation type="submission" date="2005-08" db="PDB data bank">
        <title>Solution structure of jingzhaotoxin-VII.</title>
        <authorList>
            <person name="Liao Z."/>
            <person name="Liang S.P."/>
        </authorList>
    </citation>
    <scope>PROTEIN SEQUENCE OF 30-63</scope>
    <scope>STRUCTURE BY NMR OF 30-63</scope>
    <scope>DISULFIDE BONDS</scope>
</reference>
<proteinExistence type="evidence at protein level"/>
<keyword id="KW-0002">3D-structure</keyword>
<keyword id="KW-0027">Amidation</keyword>
<keyword id="KW-0903">Direct protein sequencing</keyword>
<keyword id="KW-1015">Disulfide bond</keyword>
<keyword id="KW-0872">Ion channel impairing toxin</keyword>
<keyword id="KW-0960">Knottin</keyword>
<keyword id="KW-0528">Neurotoxin</keyword>
<keyword id="KW-0964">Secreted</keyword>
<keyword id="KW-0732">Signal</keyword>
<keyword id="KW-0800">Toxin</keyword>
<name>JZT7A_CHIGU</name>
<accession>P0C2X7</accession>
<accession>B1P1A3</accession>
<sequence>MKTSALFVIFGLVLLFCNSFAAELKTTGRGCGGLMAGCDGKSTFCCSGYNCSPTWKWCVYARPGRR</sequence>
<comment type="function">
    <text>Probable ion channel inhibitor.</text>
</comment>
<comment type="subcellular location">
    <subcellularLocation>
        <location>Secreted</location>
    </subcellularLocation>
</comment>
<comment type="tissue specificity">
    <text>Expressed by the venom gland.</text>
</comment>
<comment type="domain">
    <text>The presence of a 'disulfide through disulfide knot' structurally defines this protein as a knottin.</text>
</comment>
<comment type="mass spectrometry">
    <text>Monoisotopic mass.</text>
</comment>
<comment type="similarity">
    <text evidence="4">Belongs to the neurotoxin 10 (Hwtx-1) family. 46 (Jztx-7/10/12) subfamily.</text>
</comment>
<protein>
    <recommendedName>
        <fullName>U1-theraphotoxin-Cg1a 1</fullName>
        <shortName>U1-TRTX-Cg1a</shortName>
    </recommendedName>
    <alternativeName>
        <fullName>Jingzhaotoxin-7</fullName>
        <shortName>JZTX-7</shortName>
    </alternativeName>
    <alternativeName>
        <fullName>Jingzhaotoxin-VII</fullName>
        <shortName>JZTX-VII</shortName>
    </alternativeName>
    <alternativeName>
        <fullName>Peptide F5-16.20</fullName>
    </alternativeName>
</protein>